<evidence type="ECO:0000255" key="1">
    <source>
        <dbReference type="HAMAP-Rule" id="MF_00006"/>
    </source>
</evidence>
<feature type="chain" id="PRO_0000321437" description="Argininosuccinate lyase">
    <location>
        <begin position="1"/>
        <end position="497"/>
    </location>
</feature>
<keyword id="KW-0028">Amino-acid biosynthesis</keyword>
<keyword id="KW-0055">Arginine biosynthesis</keyword>
<keyword id="KW-0963">Cytoplasm</keyword>
<keyword id="KW-0456">Lyase</keyword>
<gene>
    <name evidence="1" type="primary">argH</name>
    <name type="ordered locus">CMM_1995</name>
</gene>
<sequence>MTESTDPSTRAGEAGALWGGRFAGGPSPELVALSRSTHFDWQLAPYDIAGSRAHARALASAGYLSDAERQAMLQALDTLEDRVRSGALVASEADEDVHGALERGLMDIAGTELGGKLRAGRSRNDQIATLVRMYLRDHAAVIHAMLVQLVDALAAQAEAAGGAIMPGRTHLQHAQPVLLAHHLLAHCWPLVRDLERLADWDARADVSPYGSGALAGSTLGLDAGAVARDLGFARSSENSIDGTAARDVVAEFAFVLAQVGIDLSRLSEEIILWNTREFGFVTLSDSFSTGSSIMPQKKNPDIAELARGKSGRLIGNLSGLLATLKGLPLAYNRDLQEDKEPVFDSVQTLEVLLPAFTGMIATLRFDTDRMAELAPQGFSLATDVAEWLVKHRVAFRDAHEVTGELVKAAESRGVGLEDLTDDDLRAVSPHLVPEVREVLSIEGSVASRDGAGGTARVRVDEQRAELVRRVAELRARADAAAERRAAAAASASGEASE</sequence>
<organism>
    <name type="scientific">Clavibacter michiganensis subsp. michiganensis (strain NCPPB 382)</name>
    <dbReference type="NCBI Taxonomy" id="443906"/>
    <lineage>
        <taxon>Bacteria</taxon>
        <taxon>Bacillati</taxon>
        <taxon>Actinomycetota</taxon>
        <taxon>Actinomycetes</taxon>
        <taxon>Micrococcales</taxon>
        <taxon>Microbacteriaceae</taxon>
        <taxon>Clavibacter</taxon>
    </lineage>
</organism>
<comment type="catalytic activity">
    <reaction evidence="1">
        <text>2-(N(omega)-L-arginino)succinate = fumarate + L-arginine</text>
        <dbReference type="Rhea" id="RHEA:24020"/>
        <dbReference type="ChEBI" id="CHEBI:29806"/>
        <dbReference type="ChEBI" id="CHEBI:32682"/>
        <dbReference type="ChEBI" id="CHEBI:57472"/>
        <dbReference type="EC" id="4.3.2.1"/>
    </reaction>
</comment>
<comment type="pathway">
    <text evidence="1">Amino-acid biosynthesis; L-arginine biosynthesis; L-arginine from L-ornithine and carbamoyl phosphate: step 3/3.</text>
</comment>
<comment type="subcellular location">
    <subcellularLocation>
        <location evidence="1">Cytoplasm</location>
    </subcellularLocation>
</comment>
<comment type="similarity">
    <text evidence="1">Belongs to the lyase 1 family. Argininosuccinate lyase subfamily.</text>
</comment>
<protein>
    <recommendedName>
        <fullName evidence="1">Argininosuccinate lyase</fullName>
        <shortName evidence="1">ASAL</shortName>
        <ecNumber evidence="1">4.3.2.1</ecNumber>
    </recommendedName>
    <alternativeName>
        <fullName evidence="1">Arginosuccinase</fullName>
    </alternativeName>
</protein>
<reference key="1">
    <citation type="journal article" date="2008" name="J. Bacteriol.">
        <title>The genome sequence of the tomato-pathogenic actinomycete Clavibacter michiganensis subsp. michiganensis NCPPB382 reveals a large island involved in pathogenicity.</title>
        <authorList>
            <person name="Gartemann K.-H."/>
            <person name="Abt B."/>
            <person name="Bekel T."/>
            <person name="Burger A."/>
            <person name="Engemann J."/>
            <person name="Fluegel M."/>
            <person name="Gaigalat L."/>
            <person name="Goesmann A."/>
            <person name="Graefen I."/>
            <person name="Kalinowski J."/>
            <person name="Kaup O."/>
            <person name="Kirchner O."/>
            <person name="Krause L."/>
            <person name="Linke B."/>
            <person name="McHardy A."/>
            <person name="Meyer F."/>
            <person name="Pohle S."/>
            <person name="Rueckert C."/>
            <person name="Schneiker S."/>
            <person name="Zellermann E.-M."/>
            <person name="Puehler A."/>
            <person name="Eichenlaub R."/>
            <person name="Kaiser O."/>
            <person name="Bartels D."/>
        </authorList>
    </citation>
    <scope>NUCLEOTIDE SEQUENCE [LARGE SCALE GENOMIC DNA]</scope>
    <source>
        <strain>NCPPB 382</strain>
    </source>
</reference>
<dbReference type="EC" id="4.3.2.1" evidence="1"/>
<dbReference type="EMBL" id="AM711867">
    <property type="protein sequence ID" value="CAN02054.1"/>
    <property type="molecule type" value="Genomic_DNA"/>
</dbReference>
<dbReference type="RefSeq" id="WP_012038682.1">
    <property type="nucleotide sequence ID" value="NC_009480.1"/>
</dbReference>
<dbReference type="SMR" id="A5CSI8"/>
<dbReference type="KEGG" id="cmi:CMM_1995"/>
<dbReference type="eggNOG" id="COG0165">
    <property type="taxonomic scope" value="Bacteria"/>
</dbReference>
<dbReference type="HOGENOM" id="CLU_027272_2_2_11"/>
<dbReference type="OrthoDB" id="9769623at2"/>
<dbReference type="UniPathway" id="UPA00068">
    <property type="reaction ID" value="UER00114"/>
</dbReference>
<dbReference type="Proteomes" id="UP000001564">
    <property type="component" value="Chromosome"/>
</dbReference>
<dbReference type="GO" id="GO:0005829">
    <property type="term" value="C:cytosol"/>
    <property type="evidence" value="ECO:0007669"/>
    <property type="project" value="TreeGrafter"/>
</dbReference>
<dbReference type="GO" id="GO:0004056">
    <property type="term" value="F:argininosuccinate lyase activity"/>
    <property type="evidence" value="ECO:0007669"/>
    <property type="project" value="UniProtKB-UniRule"/>
</dbReference>
<dbReference type="GO" id="GO:0042450">
    <property type="term" value="P:arginine biosynthetic process via ornithine"/>
    <property type="evidence" value="ECO:0007669"/>
    <property type="project" value="InterPro"/>
</dbReference>
<dbReference type="GO" id="GO:0006526">
    <property type="term" value="P:L-arginine biosynthetic process"/>
    <property type="evidence" value="ECO:0007669"/>
    <property type="project" value="UniProtKB-UniRule"/>
</dbReference>
<dbReference type="CDD" id="cd01359">
    <property type="entry name" value="Argininosuccinate_lyase"/>
    <property type="match status" value="1"/>
</dbReference>
<dbReference type="FunFam" id="1.10.40.30:FF:000001">
    <property type="entry name" value="Argininosuccinate lyase"/>
    <property type="match status" value="1"/>
</dbReference>
<dbReference type="FunFam" id="1.20.200.10:FF:000015">
    <property type="entry name" value="argininosuccinate lyase isoform X2"/>
    <property type="match status" value="1"/>
</dbReference>
<dbReference type="Gene3D" id="1.10.40.30">
    <property type="entry name" value="Fumarase/aspartase (C-terminal domain)"/>
    <property type="match status" value="1"/>
</dbReference>
<dbReference type="Gene3D" id="1.20.200.10">
    <property type="entry name" value="Fumarase/aspartase (Central domain)"/>
    <property type="match status" value="1"/>
</dbReference>
<dbReference type="Gene3D" id="1.10.275.10">
    <property type="entry name" value="Fumarase/aspartase (N-terminal domain)"/>
    <property type="match status" value="1"/>
</dbReference>
<dbReference type="HAMAP" id="MF_00006">
    <property type="entry name" value="Arg_succ_lyase"/>
    <property type="match status" value="1"/>
</dbReference>
<dbReference type="InterPro" id="IPR029419">
    <property type="entry name" value="Arg_succ_lyase_C"/>
</dbReference>
<dbReference type="InterPro" id="IPR009049">
    <property type="entry name" value="Argininosuccinate_lyase"/>
</dbReference>
<dbReference type="InterPro" id="IPR024083">
    <property type="entry name" value="Fumarase/histidase_N"/>
</dbReference>
<dbReference type="InterPro" id="IPR020557">
    <property type="entry name" value="Fumarate_lyase_CS"/>
</dbReference>
<dbReference type="InterPro" id="IPR000362">
    <property type="entry name" value="Fumarate_lyase_fam"/>
</dbReference>
<dbReference type="InterPro" id="IPR022761">
    <property type="entry name" value="Fumarate_lyase_N"/>
</dbReference>
<dbReference type="InterPro" id="IPR008948">
    <property type="entry name" value="L-Aspartase-like"/>
</dbReference>
<dbReference type="NCBIfam" id="TIGR00838">
    <property type="entry name" value="argH"/>
    <property type="match status" value="1"/>
</dbReference>
<dbReference type="PANTHER" id="PTHR43814">
    <property type="entry name" value="ARGININOSUCCINATE LYASE"/>
    <property type="match status" value="1"/>
</dbReference>
<dbReference type="PANTHER" id="PTHR43814:SF1">
    <property type="entry name" value="ARGININOSUCCINATE LYASE"/>
    <property type="match status" value="1"/>
</dbReference>
<dbReference type="Pfam" id="PF14698">
    <property type="entry name" value="ASL_C2"/>
    <property type="match status" value="1"/>
</dbReference>
<dbReference type="Pfam" id="PF00206">
    <property type="entry name" value="Lyase_1"/>
    <property type="match status" value="1"/>
</dbReference>
<dbReference type="PRINTS" id="PR00145">
    <property type="entry name" value="ARGSUCLYASE"/>
</dbReference>
<dbReference type="PRINTS" id="PR00149">
    <property type="entry name" value="FUMRATELYASE"/>
</dbReference>
<dbReference type="SUPFAM" id="SSF48557">
    <property type="entry name" value="L-aspartase-like"/>
    <property type="match status" value="1"/>
</dbReference>
<dbReference type="PROSITE" id="PS00163">
    <property type="entry name" value="FUMARATE_LYASES"/>
    <property type="match status" value="1"/>
</dbReference>
<proteinExistence type="inferred from homology"/>
<name>ARLY_CLAM3</name>
<accession>A5CSI8</accession>